<organism>
    <name type="scientific">Thermomicrobium roseum (strain ATCC 27502 / DSM 5159 / P-2)</name>
    <dbReference type="NCBI Taxonomy" id="309801"/>
    <lineage>
        <taxon>Bacteria</taxon>
        <taxon>Pseudomonadati</taxon>
        <taxon>Thermomicrobiota</taxon>
        <taxon>Thermomicrobia</taxon>
        <taxon>Thermomicrobiales</taxon>
        <taxon>Thermomicrobiaceae</taxon>
        <taxon>Thermomicrobium</taxon>
    </lineage>
</organism>
<protein>
    <recommendedName>
        <fullName evidence="1">Glutamyl-tRNA reductase</fullName>
        <shortName evidence="1">GluTR</shortName>
        <ecNumber evidence="1">1.2.1.70</ecNumber>
    </recommendedName>
</protein>
<evidence type="ECO:0000255" key="1">
    <source>
        <dbReference type="HAMAP-Rule" id="MF_00087"/>
    </source>
</evidence>
<name>HEM1_THERP</name>
<accession>B9L0Q1</accession>
<proteinExistence type="inferred from homology"/>
<sequence>MTMTLSVVAVTHRTAPVTIRERLSLPVEQQCQWLQRWGNQVPEIVLLVTCHRTEVYWLDGEETAHRGVEWLAELGGLTVEELERWVLQRSGAEAVRHAFCVAAGLDSRVVGEPQILGQVRRARDLARAAGTLGPILDRLFSCSLATGRMVRVRAGWSTGKRSLARVAVREAARLCSDLQSARVLVLGAGETGRDVIAALCRCQPAVVWWTNRSPGRLAQIPSEEPVRIVDWSEWPRLVTEADVVFVATNAPEPIVRLEHVTRHARLPRLLVDLAVPRNVDPAISDVPGIRVVTIDDLPADPVPVAAWDGVAVEPYVERAVQRYLRWLEARSIAAEIRAAHETLQSMLERELEKVLRLALRDPARTGEVKRVAAASMARKTLFPLFRALESEPQRVALALRLLAYDR</sequence>
<comment type="function">
    <text evidence="1">Catalyzes the NADPH-dependent reduction of glutamyl-tRNA(Glu) to glutamate 1-semialdehyde (GSA).</text>
</comment>
<comment type="catalytic activity">
    <reaction evidence="1">
        <text>(S)-4-amino-5-oxopentanoate + tRNA(Glu) + NADP(+) = L-glutamyl-tRNA(Glu) + NADPH + H(+)</text>
        <dbReference type="Rhea" id="RHEA:12344"/>
        <dbReference type="Rhea" id="RHEA-COMP:9663"/>
        <dbReference type="Rhea" id="RHEA-COMP:9680"/>
        <dbReference type="ChEBI" id="CHEBI:15378"/>
        <dbReference type="ChEBI" id="CHEBI:57501"/>
        <dbReference type="ChEBI" id="CHEBI:57783"/>
        <dbReference type="ChEBI" id="CHEBI:58349"/>
        <dbReference type="ChEBI" id="CHEBI:78442"/>
        <dbReference type="ChEBI" id="CHEBI:78520"/>
        <dbReference type="EC" id="1.2.1.70"/>
    </reaction>
</comment>
<comment type="pathway">
    <text evidence="1">Porphyrin-containing compound metabolism; protoporphyrin-IX biosynthesis; 5-aminolevulinate from L-glutamyl-tRNA(Glu): step 1/2.</text>
</comment>
<comment type="subunit">
    <text evidence="1">Homodimer.</text>
</comment>
<comment type="domain">
    <text evidence="1">Possesses an unusual extended V-shaped dimeric structure with each monomer consisting of three distinct domains arranged along a curved 'spinal' alpha-helix. The N-terminal catalytic domain specifically recognizes the glutamate moiety of the substrate. The second domain is the NADPH-binding domain, and the third C-terminal domain is responsible for dimerization.</text>
</comment>
<comment type="miscellaneous">
    <text evidence="1">During catalysis, the active site Cys acts as a nucleophile attacking the alpha-carbonyl group of tRNA-bound glutamate with the formation of a thioester intermediate between enzyme and glutamate, and the concomitant release of tRNA(Glu). The thioester intermediate is finally reduced by direct hydride transfer from NADPH, to form the product GSA.</text>
</comment>
<comment type="similarity">
    <text evidence="1">Belongs to the glutamyl-tRNA reductase family.</text>
</comment>
<gene>
    <name evidence="1" type="primary">hemA</name>
    <name type="ordered locus">trd_1122</name>
</gene>
<keyword id="KW-0521">NADP</keyword>
<keyword id="KW-0560">Oxidoreductase</keyword>
<keyword id="KW-0627">Porphyrin biosynthesis</keyword>
<keyword id="KW-1185">Reference proteome</keyword>
<dbReference type="EC" id="1.2.1.70" evidence="1"/>
<dbReference type="EMBL" id="CP001275">
    <property type="protein sequence ID" value="ACM05350.1"/>
    <property type="molecule type" value="Genomic_DNA"/>
</dbReference>
<dbReference type="SMR" id="B9L0Q1"/>
<dbReference type="STRING" id="309801.trd_1122"/>
<dbReference type="KEGG" id="tro:trd_1122"/>
<dbReference type="eggNOG" id="COG0373">
    <property type="taxonomic scope" value="Bacteria"/>
</dbReference>
<dbReference type="HOGENOM" id="CLU_035113_1_0_0"/>
<dbReference type="OrthoDB" id="110209at2"/>
<dbReference type="UniPathway" id="UPA00251">
    <property type="reaction ID" value="UER00316"/>
</dbReference>
<dbReference type="Proteomes" id="UP000000447">
    <property type="component" value="Chromosome"/>
</dbReference>
<dbReference type="GO" id="GO:0008883">
    <property type="term" value="F:glutamyl-tRNA reductase activity"/>
    <property type="evidence" value="ECO:0007669"/>
    <property type="project" value="UniProtKB-UniRule"/>
</dbReference>
<dbReference type="GO" id="GO:0050661">
    <property type="term" value="F:NADP binding"/>
    <property type="evidence" value="ECO:0007669"/>
    <property type="project" value="InterPro"/>
</dbReference>
<dbReference type="GO" id="GO:0019353">
    <property type="term" value="P:protoporphyrinogen IX biosynthetic process from glutamate"/>
    <property type="evidence" value="ECO:0007669"/>
    <property type="project" value="TreeGrafter"/>
</dbReference>
<dbReference type="FunFam" id="3.30.460.30:FF:000001">
    <property type="entry name" value="Glutamyl-tRNA reductase"/>
    <property type="match status" value="1"/>
</dbReference>
<dbReference type="Gene3D" id="3.30.460.30">
    <property type="entry name" value="Glutamyl-tRNA reductase, N-terminal domain"/>
    <property type="match status" value="1"/>
</dbReference>
<dbReference type="Gene3D" id="3.40.50.720">
    <property type="entry name" value="NAD(P)-binding Rossmann-like Domain"/>
    <property type="match status" value="1"/>
</dbReference>
<dbReference type="HAMAP" id="MF_00087">
    <property type="entry name" value="Glu_tRNA_reductase"/>
    <property type="match status" value="1"/>
</dbReference>
<dbReference type="InterPro" id="IPR000343">
    <property type="entry name" value="4pyrrol_synth_GluRdtase"/>
</dbReference>
<dbReference type="InterPro" id="IPR015896">
    <property type="entry name" value="4pyrrol_synth_GluRdtase_dimer"/>
</dbReference>
<dbReference type="InterPro" id="IPR015895">
    <property type="entry name" value="4pyrrol_synth_GluRdtase_N"/>
</dbReference>
<dbReference type="InterPro" id="IPR018214">
    <property type="entry name" value="GluRdtase_CS"/>
</dbReference>
<dbReference type="InterPro" id="IPR036343">
    <property type="entry name" value="GluRdtase_N_sf"/>
</dbReference>
<dbReference type="InterPro" id="IPR036291">
    <property type="entry name" value="NAD(P)-bd_dom_sf"/>
</dbReference>
<dbReference type="InterPro" id="IPR006151">
    <property type="entry name" value="Shikm_DH/Glu-tRNA_Rdtase"/>
</dbReference>
<dbReference type="NCBIfam" id="TIGR01035">
    <property type="entry name" value="hemA"/>
    <property type="match status" value="1"/>
</dbReference>
<dbReference type="PANTHER" id="PTHR43013">
    <property type="entry name" value="GLUTAMYL-TRNA REDUCTASE"/>
    <property type="match status" value="1"/>
</dbReference>
<dbReference type="PANTHER" id="PTHR43013:SF1">
    <property type="entry name" value="GLUTAMYL-TRNA REDUCTASE"/>
    <property type="match status" value="1"/>
</dbReference>
<dbReference type="Pfam" id="PF00745">
    <property type="entry name" value="GlutR_dimer"/>
    <property type="match status" value="1"/>
</dbReference>
<dbReference type="Pfam" id="PF05201">
    <property type="entry name" value="GlutR_N"/>
    <property type="match status" value="1"/>
</dbReference>
<dbReference type="Pfam" id="PF01488">
    <property type="entry name" value="Shikimate_DH"/>
    <property type="match status" value="1"/>
</dbReference>
<dbReference type="PIRSF" id="PIRSF000445">
    <property type="entry name" value="4pyrrol_synth_GluRdtase"/>
    <property type="match status" value="1"/>
</dbReference>
<dbReference type="SUPFAM" id="SSF69742">
    <property type="entry name" value="Glutamyl tRNA-reductase catalytic, N-terminal domain"/>
    <property type="match status" value="1"/>
</dbReference>
<dbReference type="SUPFAM" id="SSF51735">
    <property type="entry name" value="NAD(P)-binding Rossmann-fold domains"/>
    <property type="match status" value="1"/>
</dbReference>
<dbReference type="PROSITE" id="PS00747">
    <property type="entry name" value="GLUTR"/>
    <property type="match status" value="1"/>
</dbReference>
<feature type="chain" id="PRO_1000190542" description="Glutamyl-tRNA reductase">
    <location>
        <begin position="1"/>
        <end position="406"/>
    </location>
</feature>
<feature type="active site" description="Nucleophile" evidence="1">
    <location>
        <position position="50"/>
    </location>
</feature>
<feature type="binding site" evidence="1">
    <location>
        <begin position="49"/>
        <end position="52"/>
    </location>
    <ligand>
        <name>substrate</name>
    </ligand>
</feature>
<feature type="binding site" evidence="1">
    <location>
        <position position="107"/>
    </location>
    <ligand>
        <name>substrate</name>
    </ligand>
</feature>
<feature type="binding site" evidence="1">
    <location>
        <begin position="112"/>
        <end position="114"/>
    </location>
    <ligand>
        <name>substrate</name>
    </ligand>
</feature>
<feature type="binding site" evidence="1">
    <location>
        <position position="118"/>
    </location>
    <ligand>
        <name>substrate</name>
    </ligand>
</feature>
<feature type="binding site" evidence="1">
    <location>
        <begin position="187"/>
        <end position="192"/>
    </location>
    <ligand>
        <name>NADP(+)</name>
        <dbReference type="ChEBI" id="CHEBI:58349"/>
    </ligand>
</feature>
<feature type="site" description="Important for activity" evidence="1">
    <location>
        <position position="97"/>
    </location>
</feature>
<reference key="1">
    <citation type="journal article" date="2009" name="PLoS ONE">
        <title>Complete genome sequence of the aerobic CO-oxidizing thermophile Thermomicrobium roseum.</title>
        <authorList>
            <person name="Wu D."/>
            <person name="Raymond J."/>
            <person name="Wu M."/>
            <person name="Chatterji S."/>
            <person name="Ren Q."/>
            <person name="Graham J.E."/>
            <person name="Bryant D.A."/>
            <person name="Robb F."/>
            <person name="Colman A."/>
            <person name="Tallon L.J."/>
            <person name="Badger J.H."/>
            <person name="Madupu R."/>
            <person name="Ward N.L."/>
            <person name="Eisen J.A."/>
        </authorList>
    </citation>
    <scope>NUCLEOTIDE SEQUENCE [LARGE SCALE GENOMIC DNA]</scope>
    <source>
        <strain>ATCC 27502 / DSM 5159 / P-2</strain>
    </source>
</reference>